<name>Y088_LEGPL</name>
<proteinExistence type="inferred from homology"/>
<gene>
    <name type="ordered locus">lpl0088</name>
</gene>
<sequence length="148" mass="16490">MTIWVDADACPKMIKDILFRAAIRTNTNLILVANSYLTYPNSPFIRSILVEKGYDRADHYITSHMKAKDLVITADIPLAAEVIVKQGLAMSPRGELFTANNIKQRLTLRDINEQLRSAGERTGGPSALSAKEKTSFANALDRWLAKNK</sequence>
<comment type="similarity">
    <text evidence="1">Belongs to the UPF0178 family.</text>
</comment>
<organism>
    <name type="scientific">Legionella pneumophila (strain Lens)</name>
    <dbReference type="NCBI Taxonomy" id="297245"/>
    <lineage>
        <taxon>Bacteria</taxon>
        <taxon>Pseudomonadati</taxon>
        <taxon>Pseudomonadota</taxon>
        <taxon>Gammaproteobacteria</taxon>
        <taxon>Legionellales</taxon>
        <taxon>Legionellaceae</taxon>
        <taxon>Legionella</taxon>
    </lineage>
</organism>
<reference key="1">
    <citation type="journal article" date="2004" name="Nat. Genet.">
        <title>Evidence in the Legionella pneumophila genome for exploitation of host cell functions and high genome plasticity.</title>
        <authorList>
            <person name="Cazalet C."/>
            <person name="Rusniok C."/>
            <person name="Brueggemann H."/>
            <person name="Zidane N."/>
            <person name="Magnier A."/>
            <person name="Ma L."/>
            <person name="Tichit M."/>
            <person name="Jarraud S."/>
            <person name="Bouchier C."/>
            <person name="Vandenesch F."/>
            <person name="Kunst F."/>
            <person name="Etienne J."/>
            <person name="Glaser P."/>
            <person name="Buchrieser C."/>
        </authorList>
    </citation>
    <scope>NUCLEOTIDE SEQUENCE [LARGE SCALE GENOMIC DNA]</scope>
    <source>
        <strain>Lens</strain>
    </source>
</reference>
<protein>
    <recommendedName>
        <fullName evidence="1">UPF0178 protein lpl0088</fullName>
    </recommendedName>
</protein>
<accession>Q5X0D2</accession>
<feature type="chain" id="PRO_0000175985" description="UPF0178 protein lpl0088">
    <location>
        <begin position="1"/>
        <end position="148"/>
    </location>
</feature>
<evidence type="ECO:0000255" key="1">
    <source>
        <dbReference type="HAMAP-Rule" id="MF_00489"/>
    </source>
</evidence>
<dbReference type="EMBL" id="CR628337">
    <property type="protein sequence ID" value="CAH14318.1"/>
    <property type="molecule type" value="Genomic_DNA"/>
</dbReference>
<dbReference type="RefSeq" id="WP_011214376.1">
    <property type="nucleotide sequence ID" value="NC_006369.1"/>
</dbReference>
<dbReference type="KEGG" id="lpf:lpl0088"/>
<dbReference type="LegioList" id="lpl0088"/>
<dbReference type="HOGENOM" id="CLU_106619_2_1_6"/>
<dbReference type="Proteomes" id="UP000002517">
    <property type="component" value="Chromosome"/>
</dbReference>
<dbReference type="CDD" id="cd18720">
    <property type="entry name" value="PIN_YqxD-like"/>
    <property type="match status" value="1"/>
</dbReference>
<dbReference type="HAMAP" id="MF_00489">
    <property type="entry name" value="UPF0178"/>
    <property type="match status" value="1"/>
</dbReference>
<dbReference type="InterPro" id="IPR003791">
    <property type="entry name" value="UPF0178"/>
</dbReference>
<dbReference type="NCBIfam" id="NF001095">
    <property type="entry name" value="PRK00124.1"/>
    <property type="match status" value="1"/>
</dbReference>
<dbReference type="PANTHER" id="PTHR35146">
    <property type="entry name" value="UPF0178 PROTEIN YAII"/>
    <property type="match status" value="1"/>
</dbReference>
<dbReference type="PANTHER" id="PTHR35146:SF1">
    <property type="entry name" value="UPF0178 PROTEIN YAII"/>
    <property type="match status" value="1"/>
</dbReference>
<dbReference type="Pfam" id="PF02639">
    <property type="entry name" value="DUF188"/>
    <property type="match status" value="1"/>
</dbReference>